<keyword id="KW-0413">Isomerase</keyword>
<dbReference type="EC" id="5.3.1.6" evidence="1"/>
<dbReference type="EMBL" id="AM933172">
    <property type="protein sequence ID" value="CAR34484.1"/>
    <property type="molecule type" value="Genomic_DNA"/>
</dbReference>
<dbReference type="RefSeq" id="WP_000189741.1">
    <property type="nucleotide sequence ID" value="NC_011294.1"/>
</dbReference>
<dbReference type="SMR" id="B5QXJ0"/>
<dbReference type="KEGG" id="set:SEN2906"/>
<dbReference type="HOGENOM" id="CLU_056590_1_1_6"/>
<dbReference type="UniPathway" id="UPA00115">
    <property type="reaction ID" value="UER00412"/>
</dbReference>
<dbReference type="Proteomes" id="UP000000613">
    <property type="component" value="Chromosome"/>
</dbReference>
<dbReference type="GO" id="GO:0005829">
    <property type="term" value="C:cytosol"/>
    <property type="evidence" value="ECO:0007669"/>
    <property type="project" value="TreeGrafter"/>
</dbReference>
<dbReference type="GO" id="GO:0004751">
    <property type="term" value="F:ribose-5-phosphate isomerase activity"/>
    <property type="evidence" value="ECO:0007669"/>
    <property type="project" value="UniProtKB-UniRule"/>
</dbReference>
<dbReference type="GO" id="GO:0006014">
    <property type="term" value="P:D-ribose metabolic process"/>
    <property type="evidence" value="ECO:0007669"/>
    <property type="project" value="TreeGrafter"/>
</dbReference>
<dbReference type="GO" id="GO:0009052">
    <property type="term" value="P:pentose-phosphate shunt, non-oxidative branch"/>
    <property type="evidence" value="ECO:0007669"/>
    <property type="project" value="UniProtKB-UniRule"/>
</dbReference>
<dbReference type="CDD" id="cd01398">
    <property type="entry name" value="RPI_A"/>
    <property type="match status" value="1"/>
</dbReference>
<dbReference type="FunFam" id="3.30.70.260:FF:000004">
    <property type="entry name" value="Ribose-5-phosphate isomerase A"/>
    <property type="match status" value="1"/>
</dbReference>
<dbReference type="FunFam" id="3.40.50.1360:FF:000001">
    <property type="entry name" value="Ribose-5-phosphate isomerase A"/>
    <property type="match status" value="1"/>
</dbReference>
<dbReference type="Gene3D" id="3.30.70.260">
    <property type="match status" value="1"/>
</dbReference>
<dbReference type="Gene3D" id="3.40.50.1360">
    <property type="match status" value="1"/>
</dbReference>
<dbReference type="HAMAP" id="MF_00170">
    <property type="entry name" value="Rib_5P_isom_A"/>
    <property type="match status" value="1"/>
</dbReference>
<dbReference type="InterPro" id="IPR037171">
    <property type="entry name" value="NagB/RpiA_transferase-like"/>
</dbReference>
<dbReference type="InterPro" id="IPR020672">
    <property type="entry name" value="Ribose5P_isomerase_typA_subgr"/>
</dbReference>
<dbReference type="InterPro" id="IPR004788">
    <property type="entry name" value="Ribose5P_isomerase_type_A"/>
</dbReference>
<dbReference type="NCBIfam" id="NF001924">
    <property type="entry name" value="PRK00702.1"/>
    <property type="match status" value="1"/>
</dbReference>
<dbReference type="NCBIfam" id="TIGR00021">
    <property type="entry name" value="rpiA"/>
    <property type="match status" value="1"/>
</dbReference>
<dbReference type="PANTHER" id="PTHR11934">
    <property type="entry name" value="RIBOSE-5-PHOSPHATE ISOMERASE"/>
    <property type="match status" value="1"/>
</dbReference>
<dbReference type="PANTHER" id="PTHR11934:SF0">
    <property type="entry name" value="RIBOSE-5-PHOSPHATE ISOMERASE"/>
    <property type="match status" value="1"/>
</dbReference>
<dbReference type="Pfam" id="PF06026">
    <property type="entry name" value="Rib_5-P_isom_A"/>
    <property type="match status" value="1"/>
</dbReference>
<dbReference type="SUPFAM" id="SSF75445">
    <property type="entry name" value="D-ribose-5-phosphate isomerase (RpiA), lid domain"/>
    <property type="match status" value="1"/>
</dbReference>
<dbReference type="SUPFAM" id="SSF100950">
    <property type="entry name" value="NagB/RpiA/CoA transferase-like"/>
    <property type="match status" value="1"/>
</dbReference>
<comment type="function">
    <text evidence="1">Catalyzes the reversible conversion of ribose-5-phosphate to ribulose 5-phosphate.</text>
</comment>
<comment type="catalytic activity">
    <reaction evidence="1">
        <text>aldehydo-D-ribose 5-phosphate = D-ribulose 5-phosphate</text>
        <dbReference type="Rhea" id="RHEA:14657"/>
        <dbReference type="ChEBI" id="CHEBI:58121"/>
        <dbReference type="ChEBI" id="CHEBI:58273"/>
        <dbReference type="EC" id="5.3.1.6"/>
    </reaction>
</comment>
<comment type="pathway">
    <text evidence="1">Carbohydrate degradation; pentose phosphate pathway; D-ribose 5-phosphate from D-ribulose 5-phosphate (non-oxidative stage): step 1/1.</text>
</comment>
<comment type="subunit">
    <text evidence="1">Homodimer.</text>
</comment>
<comment type="similarity">
    <text evidence="1">Belongs to the ribose 5-phosphate isomerase family.</text>
</comment>
<gene>
    <name evidence="1" type="primary">rpiA</name>
    <name type="ordered locus">SEN2906</name>
</gene>
<protein>
    <recommendedName>
        <fullName evidence="1">Ribose-5-phosphate isomerase A</fullName>
        <ecNumber evidence="1">5.3.1.6</ecNumber>
    </recommendedName>
    <alternativeName>
        <fullName evidence="1">Phosphoriboisomerase A</fullName>
        <shortName evidence="1">PRI</shortName>
    </alternativeName>
</protein>
<evidence type="ECO:0000255" key="1">
    <source>
        <dbReference type="HAMAP-Rule" id="MF_00170"/>
    </source>
</evidence>
<name>RPIA_SALEP</name>
<proteinExistence type="inferred from homology"/>
<feature type="chain" id="PRO_1000097690" description="Ribose-5-phosphate isomerase A">
    <location>
        <begin position="1"/>
        <end position="219"/>
    </location>
</feature>
<feature type="active site" description="Proton acceptor" evidence="1">
    <location>
        <position position="103"/>
    </location>
</feature>
<feature type="binding site" evidence="1">
    <location>
        <begin position="28"/>
        <end position="31"/>
    </location>
    <ligand>
        <name>substrate</name>
    </ligand>
</feature>
<feature type="binding site" evidence="1">
    <location>
        <begin position="81"/>
        <end position="84"/>
    </location>
    <ligand>
        <name>substrate</name>
    </ligand>
</feature>
<feature type="binding site" evidence="1">
    <location>
        <begin position="94"/>
        <end position="97"/>
    </location>
    <ligand>
        <name>substrate</name>
    </ligand>
</feature>
<feature type="binding site" evidence="1">
    <location>
        <position position="121"/>
    </location>
    <ligand>
        <name>substrate</name>
    </ligand>
</feature>
<organism>
    <name type="scientific">Salmonella enteritidis PT4 (strain P125109)</name>
    <dbReference type="NCBI Taxonomy" id="550537"/>
    <lineage>
        <taxon>Bacteria</taxon>
        <taxon>Pseudomonadati</taxon>
        <taxon>Pseudomonadota</taxon>
        <taxon>Gammaproteobacteria</taxon>
        <taxon>Enterobacterales</taxon>
        <taxon>Enterobacteriaceae</taxon>
        <taxon>Salmonella</taxon>
    </lineage>
</organism>
<sequence>MTQDELKKAVGWAALQYVQPGTIVGVGTGSTAAHFIDALGTMKGQIEGAVSSSDASTEKLKGLGIHVFDLNEVDSLGIYVDGADEINGHMQMIKGGGAALTREKIIASVAEKFICIADASKQVDILGKFPLPVEVIPMARSAVARQLVKLGGRPEYRQNVVTDNGNVILDVYGMEILDPIALENAINAIPGVVTVGLFANRGADVALIGTPDGVKTIVK</sequence>
<accession>B5QXJ0</accession>
<reference key="1">
    <citation type="journal article" date="2008" name="Genome Res.">
        <title>Comparative genome analysis of Salmonella enteritidis PT4 and Salmonella gallinarum 287/91 provides insights into evolutionary and host adaptation pathways.</title>
        <authorList>
            <person name="Thomson N.R."/>
            <person name="Clayton D.J."/>
            <person name="Windhorst D."/>
            <person name="Vernikos G."/>
            <person name="Davidson S."/>
            <person name="Churcher C."/>
            <person name="Quail M.A."/>
            <person name="Stevens M."/>
            <person name="Jones M.A."/>
            <person name="Watson M."/>
            <person name="Barron A."/>
            <person name="Layton A."/>
            <person name="Pickard D."/>
            <person name="Kingsley R.A."/>
            <person name="Bignell A."/>
            <person name="Clark L."/>
            <person name="Harris B."/>
            <person name="Ormond D."/>
            <person name="Abdellah Z."/>
            <person name="Brooks K."/>
            <person name="Cherevach I."/>
            <person name="Chillingworth T."/>
            <person name="Woodward J."/>
            <person name="Norberczak H."/>
            <person name="Lord A."/>
            <person name="Arrowsmith C."/>
            <person name="Jagels K."/>
            <person name="Moule S."/>
            <person name="Mungall K."/>
            <person name="Saunders M."/>
            <person name="Whitehead S."/>
            <person name="Chabalgoity J.A."/>
            <person name="Maskell D."/>
            <person name="Humphreys T."/>
            <person name="Roberts M."/>
            <person name="Barrow P.A."/>
            <person name="Dougan G."/>
            <person name="Parkhill J."/>
        </authorList>
    </citation>
    <scope>NUCLEOTIDE SEQUENCE [LARGE SCALE GENOMIC DNA]</scope>
    <source>
        <strain>P125109</strain>
    </source>
</reference>